<name>ATPG_STRZJ</name>
<gene>
    <name evidence="1" type="primary">atpG</name>
    <name type="ordered locus">SPJ_1411</name>
</gene>
<reference key="1">
    <citation type="journal article" date="2010" name="Genome Biol.">
        <title>Structure and dynamics of the pan-genome of Streptococcus pneumoniae and closely related species.</title>
        <authorList>
            <person name="Donati C."/>
            <person name="Hiller N.L."/>
            <person name="Tettelin H."/>
            <person name="Muzzi A."/>
            <person name="Croucher N.J."/>
            <person name="Angiuoli S.V."/>
            <person name="Oggioni M."/>
            <person name="Dunning Hotopp J.C."/>
            <person name="Hu F.Z."/>
            <person name="Riley D.R."/>
            <person name="Covacci A."/>
            <person name="Mitchell T.J."/>
            <person name="Bentley S.D."/>
            <person name="Kilian M."/>
            <person name="Ehrlich G.D."/>
            <person name="Rappuoli R."/>
            <person name="Moxon E.R."/>
            <person name="Masignani V."/>
        </authorList>
    </citation>
    <scope>NUCLEOTIDE SEQUENCE [LARGE SCALE GENOMIC DNA]</scope>
    <source>
        <strain>JJA</strain>
    </source>
</reference>
<keyword id="KW-0066">ATP synthesis</keyword>
<keyword id="KW-1003">Cell membrane</keyword>
<keyword id="KW-0139">CF(1)</keyword>
<keyword id="KW-0375">Hydrogen ion transport</keyword>
<keyword id="KW-0406">Ion transport</keyword>
<keyword id="KW-0472">Membrane</keyword>
<keyword id="KW-0813">Transport</keyword>
<sequence>MAVSLNDIKTKIASTKNTSQITNAMQMVSAAKLGRSEEAARNFQVYAQKVRKLLTDILHGNGAGASTNPMLISRSVKKTGYIVITSDRGLVGGYNSSILKAVMELKEEYHPDGKGFEMICIGGMGADFFKARGIQPLYELRGLADQPSFDQVRKIISKTVEMYQNELFDELYVCYNHHVNTLTSQMRVEQMLPIVDLDPNEADEEYSLTFELETSREEILEQLLPQFAESMIYGAIIDAKTAENAAGMTAMQTATDNAKKVINDLTIQYNRARQAAITQEITEIVAGASALE</sequence>
<protein>
    <recommendedName>
        <fullName evidence="1">ATP synthase gamma chain</fullName>
    </recommendedName>
    <alternativeName>
        <fullName evidence="1">ATP synthase F1 sector gamma subunit</fullName>
    </alternativeName>
    <alternativeName>
        <fullName evidence="1">F-ATPase gamma subunit</fullName>
    </alternativeName>
</protein>
<comment type="function">
    <text evidence="1">Produces ATP from ADP in the presence of a proton gradient across the membrane. The gamma chain is believed to be important in regulating ATPase activity and the flow of protons through the CF(0) complex.</text>
</comment>
<comment type="subunit">
    <text evidence="1">F-type ATPases have 2 components, CF(1) - the catalytic core - and CF(0) - the membrane proton channel. CF(1) has five subunits: alpha(3), beta(3), gamma(1), delta(1), epsilon(1). CF(0) has three main subunits: a, b and c.</text>
</comment>
<comment type="subcellular location">
    <subcellularLocation>
        <location evidence="1">Cell membrane</location>
        <topology evidence="1">Peripheral membrane protein</topology>
    </subcellularLocation>
</comment>
<comment type="similarity">
    <text evidence="1">Belongs to the ATPase gamma chain family.</text>
</comment>
<organism>
    <name type="scientific">Streptococcus pneumoniae (strain JJA)</name>
    <dbReference type="NCBI Taxonomy" id="488222"/>
    <lineage>
        <taxon>Bacteria</taxon>
        <taxon>Bacillati</taxon>
        <taxon>Bacillota</taxon>
        <taxon>Bacilli</taxon>
        <taxon>Lactobacillales</taxon>
        <taxon>Streptococcaceae</taxon>
        <taxon>Streptococcus</taxon>
    </lineage>
</organism>
<evidence type="ECO:0000255" key="1">
    <source>
        <dbReference type="HAMAP-Rule" id="MF_00815"/>
    </source>
</evidence>
<feature type="chain" id="PRO_1000148642" description="ATP synthase gamma chain">
    <location>
        <begin position="1"/>
        <end position="292"/>
    </location>
</feature>
<accession>C1CF94</accession>
<dbReference type="EMBL" id="CP000919">
    <property type="protein sequence ID" value="ACO18828.1"/>
    <property type="molecule type" value="Genomic_DNA"/>
</dbReference>
<dbReference type="RefSeq" id="WP_000301210.1">
    <property type="nucleotide sequence ID" value="NC_012466.1"/>
</dbReference>
<dbReference type="SMR" id="C1CF94"/>
<dbReference type="KEGG" id="sjj:SPJ_1411"/>
<dbReference type="HOGENOM" id="CLU_050669_0_1_9"/>
<dbReference type="Proteomes" id="UP000002206">
    <property type="component" value="Chromosome"/>
</dbReference>
<dbReference type="GO" id="GO:0005886">
    <property type="term" value="C:plasma membrane"/>
    <property type="evidence" value="ECO:0007669"/>
    <property type="project" value="UniProtKB-SubCell"/>
</dbReference>
<dbReference type="GO" id="GO:0045259">
    <property type="term" value="C:proton-transporting ATP synthase complex"/>
    <property type="evidence" value="ECO:0007669"/>
    <property type="project" value="UniProtKB-KW"/>
</dbReference>
<dbReference type="GO" id="GO:0005524">
    <property type="term" value="F:ATP binding"/>
    <property type="evidence" value="ECO:0007669"/>
    <property type="project" value="UniProtKB-UniRule"/>
</dbReference>
<dbReference type="GO" id="GO:0046933">
    <property type="term" value="F:proton-transporting ATP synthase activity, rotational mechanism"/>
    <property type="evidence" value="ECO:0007669"/>
    <property type="project" value="UniProtKB-UniRule"/>
</dbReference>
<dbReference type="GO" id="GO:0042777">
    <property type="term" value="P:proton motive force-driven plasma membrane ATP synthesis"/>
    <property type="evidence" value="ECO:0007669"/>
    <property type="project" value="UniProtKB-UniRule"/>
</dbReference>
<dbReference type="CDD" id="cd12151">
    <property type="entry name" value="F1-ATPase_gamma"/>
    <property type="match status" value="1"/>
</dbReference>
<dbReference type="FunFam" id="3.40.1380.10:FF:000002">
    <property type="entry name" value="ATP synthase gamma chain"/>
    <property type="match status" value="1"/>
</dbReference>
<dbReference type="Gene3D" id="3.40.1380.10">
    <property type="match status" value="1"/>
</dbReference>
<dbReference type="Gene3D" id="1.10.287.80">
    <property type="entry name" value="ATP synthase, gamma subunit, helix hairpin domain"/>
    <property type="match status" value="1"/>
</dbReference>
<dbReference type="HAMAP" id="MF_00815">
    <property type="entry name" value="ATP_synth_gamma_bact"/>
    <property type="match status" value="1"/>
</dbReference>
<dbReference type="InterPro" id="IPR035968">
    <property type="entry name" value="ATP_synth_F1_ATPase_gsu"/>
</dbReference>
<dbReference type="InterPro" id="IPR000131">
    <property type="entry name" value="ATP_synth_F1_gsu"/>
</dbReference>
<dbReference type="InterPro" id="IPR023632">
    <property type="entry name" value="ATP_synth_F1_gsu_CS"/>
</dbReference>
<dbReference type="NCBIfam" id="TIGR01146">
    <property type="entry name" value="ATPsyn_F1gamma"/>
    <property type="match status" value="1"/>
</dbReference>
<dbReference type="NCBIfam" id="NF004147">
    <property type="entry name" value="PRK05621.2-1"/>
    <property type="match status" value="1"/>
</dbReference>
<dbReference type="PANTHER" id="PTHR11693">
    <property type="entry name" value="ATP SYNTHASE GAMMA CHAIN"/>
    <property type="match status" value="1"/>
</dbReference>
<dbReference type="PANTHER" id="PTHR11693:SF22">
    <property type="entry name" value="ATP SYNTHASE SUBUNIT GAMMA, MITOCHONDRIAL"/>
    <property type="match status" value="1"/>
</dbReference>
<dbReference type="Pfam" id="PF00231">
    <property type="entry name" value="ATP-synt"/>
    <property type="match status" value="1"/>
</dbReference>
<dbReference type="PRINTS" id="PR00126">
    <property type="entry name" value="ATPASEGAMMA"/>
</dbReference>
<dbReference type="SUPFAM" id="SSF52943">
    <property type="entry name" value="ATP synthase (F1-ATPase), gamma subunit"/>
    <property type="match status" value="1"/>
</dbReference>
<dbReference type="PROSITE" id="PS00153">
    <property type="entry name" value="ATPASE_GAMMA"/>
    <property type="match status" value="1"/>
</dbReference>
<proteinExistence type="inferred from homology"/>